<dbReference type="EC" id="2.1.2.10" evidence="1"/>
<dbReference type="EMBL" id="CP000728">
    <property type="protein sequence ID" value="ABS40921.1"/>
    <property type="molecule type" value="Genomic_DNA"/>
</dbReference>
<dbReference type="RefSeq" id="WP_011987638.1">
    <property type="nucleotide sequence ID" value="NC_009699.1"/>
</dbReference>
<dbReference type="SMR" id="A7GB83"/>
<dbReference type="KEGG" id="cbf:CLI_0765"/>
<dbReference type="HOGENOM" id="CLU_007884_10_2_9"/>
<dbReference type="Proteomes" id="UP000002410">
    <property type="component" value="Chromosome"/>
</dbReference>
<dbReference type="GO" id="GO:0005829">
    <property type="term" value="C:cytosol"/>
    <property type="evidence" value="ECO:0007669"/>
    <property type="project" value="TreeGrafter"/>
</dbReference>
<dbReference type="GO" id="GO:0005960">
    <property type="term" value="C:glycine cleavage complex"/>
    <property type="evidence" value="ECO:0007669"/>
    <property type="project" value="InterPro"/>
</dbReference>
<dbReference type="GO" id="GO:0004047">
    <property type="term" value="F:aminomethyltransferase activity"/>
    <property type="evidence" value="ECO:0007669"/>
    <property type="project" value="UniProtKB-UniRule"/>
</dbReference>
<dbReference type="GO" id="GO:0008483">
    <property type="term" value="F:transaminase activity"/>
    <property type="evidence" value="ECO:0007669"/>
    <property type="project" value="UniProtKB-KW"/>
</dbReference>
<dbReference type="GO" id="GO:0019464">
    <property type="term" value="P:glycine decarboxylation via glycine cleavage system"/>
    <property type="evidence" value="ECO:0007669"/>
    <property type="project" value="UniProtKB-UniRule"/>
</dbReference>
<dbReference type="FunFam" id="2.40.30.110:FF:000014">
    <property type="entry name" value="Aminomethyltransferase"/>
    <property type="match status" value="1"/>
</dbReference>
<dbReference type="FunFam" id="3.30.70.1400:FF:000001">
    <property type="entry name" value="Aminomethyltransferase"/>
    <property type="match status" value="1"/>
</dbReference>
<dbReference type="FunFam" id="4.10.1250.10:FF:000001">
    <property type="entry name" value="Aminomethyltransferase"/>
    <property type="match status" value="1"/>
</dbReference>
<dbReference type="Gene3D" id="2.40.30.110">
    <property type="entry name" value="Aminomethyltransferase beta-barrel domains"/>
    <property type="match status" value="1"/>
</dbReference>
<dbReference type="Gene3D" id="3.30.70.1400">
    <property type="entry name" value="Aminomethyltransferase beta-barrel domains"/>
    <property type="match status" value="1"/>
</dbReference>
<dbReference type="Gene3D" id="4.10.1250.10">
    <property type="entry name" value="Aminomethyltransferase fragment"/>
    <property type="match status" value="1"/>
</dbReference>
<dbReference type="Gene3D" id="3.30.1360.120">
    <property type="entry name" value="Probable tRNA modification gtpase trme, domain 1"/>
    <property type="match status" value="1"/>
</dbReference>
<dbReference type="HAMAP" id="MF_00259">
    <property type="entry name" value="GcvT"/>
    <property type="match status" value="1"/>
</dbReference>
<dbReference type="InterPro" id="IPR006223">
    <property type="entry name" value="GCS_T"/>
</dbReference>
<dbReference type="InterPro" id="IPR022903">
    <property type="entry name" value="GCS_T_bac"/>
</dbReference>
<dbReference type="InterPro" id="IPR013977">
    <property type="entry name" value="GCST_C"/>
</dbReference>
<dbReference type="InterPro" id="IPR006222">
    <property type="entry name" value="GCV_T_N"/>
</dbReference>
<dbReference type="InterPro" id="IPR028896">
    <property type="entry name" value="GcvT/YgfZ/DmdA"/>
</dbReference>
<dbReference type="InterPro" id="IPR029043">
    <property type="entry name" value="GcvT/YgfZ_C"/>
</dbReference>
<dbReference type="InterPro" id="IPR027266">
    <property type="entry name" value="TrmE/GcvT_dom1"/>
</dbReference>
<dbReference type="NCBIfam" id="TIGR00528">
    <property type="entry name" value="gcvT"/>
    <property type="match status" value="1"/>
</dbReference>
<dbReference type="NCBIfam" id="NF001567">
    <property type="entry name" value="PRK00389.1"/>
    <property type="match status" value="1"/>
</dbReference>
<dbReference type="PANTHER" id="PTHR43757">
    <property type="entry name" value="AMINOMETHYLTRANSFERASE"/>
    <property type="match status" value="1"/>
</dbReference>
<dbReference type="PANTHER" id="PTHR43757:SF2">
    <property type="entry name" value="AMINOMETHYLTRANSFERASE, MITOCHONDRIAL"/>
    <property type="match status" value="1"/>
</dbReference>
<dbReference type="Pfam" id="PF01571">
    <property type="entry name" value="GCV_T"/>
    <property type="match status" value="1"/>
</dbReference>
<dbReference type="Pfam" id="PF08669">
    <property type="entry name" value="GCV_T_C"/>
    <property type="match status" value="1"/>
</dbReference>
<dbReference type="PIRSF" id="PIRSF006487">
    <property type="entry name" value="GcvT"/>
    <property type="match status" value="1"/>
</dbReference>
<dbReference type="SUPFAM" id="SSF101790">
    <property type="entry name" value="Aminomethyltransferase beta-barrel domain"/>
    <property type="match status" value="1"/>
</dbReference>
<dbReference type="SUPFAM" id="SSF103025">
    <property type="entry name" value="Folate-binding domain"/>
    <property type="match status" value="1"/>
</dbReference>
<protein>
    <recommendedName>
        <fullName evidence="1">Aminomethyltransferase</fullName>
        <ecNumber evidence="1">2.1.2.10</ecNumber>
    </recommendedName>
    <alternativeName>
        <fullName evidence="1">Glycine cleavage system T protein</fullName>
    </alternativeName>
</protein>
<accession>A7GB83</accession>
<comment type="function">
    <text evidence="1">The glycine cleavage system catalyzes the degradation of glycine.</text>
</comment>
<comment type="catalytic activity">
    <reaction evidence="1">
        <text>N(6)-[(R)-S(8)-aminomethyldihydrolipoyl]-L-lysyl-[protein] + (6S)-5,6,7,8-tetrahydrofolate = N(6)-[(R)-dihydrolipoyl]-L-lysyl-[protein] + (6R)-5,10-methylene-5,6,7,8-tetrahydrofolate + NH4(+)</text>
        <dbReference type="Rhea" id="RHEA:16945"/>
        <dbReference type="Rhea" id="RHEA-COMP:10475"/>
        <dbReference type="Rhea" id="RHEA-COMP:10492"/>
        <dbReference type="ChEBI" id="CHEBI:15636"/>
        <dbReference type="ChEBI" id="CHEBI:28938"/>
        <dbReference type="ChEBI" id="CHEBI:57453"/>
        <dbReference type="ChEBI" id="CHEBI:83100"/>
        <dbReference type="ChEBI" id="CHEBI:83143"/>
        <dbReference type="EC" id="2.1.2.10"/>
    </reaction>
</comment>
<comment type="subunit">
    <text evidence="1">The glycine cleavage system is composed of four proteins: P, T, L and H.</text>
</comment>
<comment type="similarity">
    <text evidence="1">Belongs to the GcvT family.</text>
</comment>
<feature type="chain" id="PRO_1000047658" description="Aminomethyltransferase">
    <location>
        <begin position="1"/>
        <end position="370"/>
    </location>
</feature>
<organism>
    <name type="scientific">Clostridium botulinum (strain Langeland / NCTC 10281 / Type F)</name>
    <dbReference type="NCBI Taxonomy" id="441772"/>
    <lineage>
        <taxon>Bacteria</taxon>
        <taxon>Bacillati</taxon>
        <taxon>Bacillota</taxon>
        <taxon>Clostridia</taxon>
        <taxon>Eubacteriales</taxon>
        <taxon>Clostridiaceae</taxon>
        <taxon>Clostridium</taxon>
    </lineage>
</organism>
<name>GCST_CLOBL</name>
<gene>
    <name evidence="1" type="primary">gcvT</name>
    <name type="ordered locus">CLI_0765</name>
</gene>
<proteinExistence type="inferred from homology"/>
<keyword id="KW-0032">Aminotransferase</keyword>
<keyword id="KW-0808">Transferase</keyword>
<evidence type="ECO:0000255" key="1">
    <source>
        <dbReference type="HAMAP-Rule" id="MF_00259"/>
    </source>
</evidence>
<sequence length="370" mass="41529">MEDLKVTPLRGVYEEYGGKIVDFAGYELPTQFKGFLHEHHTVREKAGLFDVSHMGEAMVTGKDAGKFIQYLMTNDINVLKDNEVLYTFMCNEDGGVIDDLLVYKFAGDEFFLVINASNKDKDVKWIMGHKGDFDVEIVDVSDSIAQLAFQGPLAEEILQKIVDVDLQEIKFFKLKRDVLVDGKKCLVSRTGYTGEDGFEIYCKPEDAKGLWHAILNAGKEEGAQPIGLGARDTLRFEASLLLYGNEMDETITPLEVGMGFFVKLKVEEDFIGKDALIKQKAEGITRKLVGFELLDKGIPRHGYEVIKDGKVIGHVTTGYKSPTLNKAIGLALVEEQYSKIGTEFNIKVRKKELKAVAIDKRFYTKKTKTK</sequence>
<reference key="1">
    <citation type="submission" date="2007-06" db="EMBL/GenBank/DDBJ databases">
        <authorList>
            <person name="Brinkac L.M."/>
            <person name="Daugherty S."/>
            <person name="Dodson R.J."/>
            <person name="Madupu R."/>
            <person name="Brown J.L."/>
            <person name="Bruce D."/>
            <person name="Detter C."/>
            <person name="Munk C."/>
            <person name="Smith L.A."/>
            <person name="Smith T.J."/>
            <person name="White O."/>
            <person name="Brettin T.S."/>
        </authorList>
    </citation>
    <scope>NUCLEOTIDE SEQUENCE [LARGE SCALE GENOMIC DNA]</scope>
    <source>
        <strain>Langeland / NCTC 10281 / Type F</strain>
    </source>
</reference>